<accession>Q0A9E2</accession>
<name>ZNUC_ALKEH</name>
<proteinExistence type="inferred from homology"/>
<dbReference type="EC" id="7.2.2.20" evidence="1"/>
<dbReference type="EMBL" id="CP000453">
    <property type="protein sequence ID" value="ABI56545.1"/>
    <property type="molecule type" value="Genomic_DNA"/>
</dbReference>
<dbReference type="RefSeq" id="WP_011628940.1">
    <property type="nucleotide sequence ID" value="NC_008340.1"/>
</dbReference>
<dbReference type="SMR" id="Q0A9E2"/>
<dbReference type="KEGG" id="aeh:Mlg_1196"/>
<dbReference type="eggNOG" id="COG1121">
    <property type="taxonomic scope" value="Bacteria"/>
</dbReference>
<dbReference type="HOGENOM" id="CLU_000604_1_11_6"/>
<dbReference type="OrthoDB" id="9806726at2"/>
<dbReference type="Proteomes" id="UP000001962">
    <property type="component" value="Chromosome"/>
</dbReference>
<dbReference type="GO" id="GO:0005886">
    <property type="term" value="C:plasma membrane"/>
    <property type="evidence" value="ECO:0007669"/>
    <property type="project" value="UniProtKB-SubCell"/>
</dbReference>
<dbReference type="GO" id="GO:0015633">
    <property type="term" value="F:ABC-type zinc transporter activity"/>
    <property type="evidence" value="ECO:0007669"/>
    <property type="project" value="UniProtKB-EC"/>
</dbReference>
<dbReference type="GO" id="GO:0005524">
    <property type="term" value="F:ATP binding"/>
    <property type="evidence" value="ECO:0007669"/>
    <property type="project" value="UniProtKB-KW"/>
</dbReference>
<dbReference type="GO" id="GO:0016887">
    <property type="term" value="F:ATP hydrolysis activity"/>
    <property type="evidence" value="ECO:0007669"/>
    <property type="project" value="InterPro"/>
</dbReference>
<dbReference type="GO" id="GO:0010043">
    <property type="term" value="P:response to zinc ion"/>
    <property type="evidence" value="ECO:0007669"/>
    <property type="project" value="TreeGrafter"/>
</dbReference>
<dbReference type="Gene3D" id="3.40.50.300">
    <property type="entry name" value="P-loop containing nucleotide triphosphate hydrolases"/>
    <property type="match status" value="1"/>
</dbReference>
<dbReference type="InterPro" id="IPR003593">
    <property type="entry name" value="AAA+_ATPase"/>
</dbReference>
<dbReference type="InterPro" id="IPR003439">
    <property type="entry name" value="ABC_transporter-like_ATP-bd"/>
</dbReference>
<dbReference type="InterPro" id="IPR017871">
    <property type="entry name" value="ABC_transporter-like_CS"/>
</dbReference>
<dbReference type="InterPro" id="IPR050153">
    <property type="entry name" value="Metal_Ion_Import_ABC"/>
</dbReference>
<dbReference type="InterPro" id="IPR027417">
    <property type="entry name" value="P-loop_NTPase"/>
</dbReference>
<dbReference type="PANTHER" id="PTHR42734">
    <property type="entry name" value="METAL TRANSPORT SYSTEM ATP-BINDING PROTEIN TM_0124-RELATED"/>
    <property type="match status" value="1"/>
</dbReference>
<dbReference type="PANTHER" id="PTHR42734:SF9">
    <property type="entry name" value="ZINC IMPORT ATP-BINDING PROTEIN ZNUC"/>
    <property type="match status" value="1"/>
</dbReference>
<dbReference type="Pfam" id="PF00005">
    <property type="entry name" value="ABC_tran"/>
    <property type="match status" value="1"/>
</dbReference>
<dbReference type="SMART" id="SM00382">
    <property type="entry name" value="AAA"/>
    <property type="match status" value="1"/>
</dbReference>
<dbReference type="SUPFAM" id="SSF52540">
    <property type="entry name" value="P-loop containing nucleoside triphosphate hydrolases"/>
    <property type="match status" value="1"/>
</dbReference>
<dbReference type="PROSITE" id="PS00211">
    <property type="entry name" value="ABC_TRANSPORTER_1"/>
    <property type="match status" value="1"/>
</dbReference>
<dbReference type="PROSITE" id="PS50893">
    <property type="entry name" value="ABC_TRANSPORTER_2"/>
    <property type="match status" value="1"/>
</dbReference>
<dbReference type="PROSITE" id="PS51298">
    <property type="entry name" value="ZNUC"/>
    <property type="match status" value="1"/>
</dbReference>
<keyword id="KW-0067">ATP-binding</keyword>
<keyword id="KW-0997">Cell inner membrane</keyword>
<keyword id="KW-1003">Cell membrane</keyword>
<keyword id="KW-0406">Ion transport</keyword>
<keyword id="KW-0472">Membrane</keyword>
<keyword id="KW-0547">Nucleotide-binding</keyword>
<keyword id="KW-1185">Reference proteome</keyword>
<keyword id="KW-1278">Translocase</keyword>
<keyword id="KW-0813">Transport</keyword>
<keyword id="KW-0862">Zinc</keyword>
<keyword id="KW-0864">Zinc transport</keyword>
<evidence type="ECO:0000255" key="1">
    <source>
        <dbReference type="HAMAP-Rule" id="MF_01725"/>
    </source>
</evidence>
<reference key="1">
    <citation type="submission" date="2006-08" db="EMBL/GenBank/DDBJ databases">
        <title>Complete sequence of Alkalilimnicola ehrilichei MLHE-1.</title>
        <authorList>
            <person name="Copeland A."/>
            <person name="Lucas S."/>
            <person name="Lapidus A."/>
            <person name="Barry K."/>
            <person name="Detter J.C."/>
            <person name="Glavina del Rio T."/>
            <person name="Hammon N."/>
            <person name="Israni S."/>
            <person name="Dalin E."/>
            <person name="Tice H."/>
            <person name="Pitluck S."/>
            <person name="Sims D."/>
            <person name="Brettin T."/>
            <person name="Bruce D."/>
            <person name="Han C."/>
            <person name="Tapia R."/>
            <person name="Gilna P."/>
            <person name="Schmutz J."/>
            <person name="Larimer F."/>
            <person name="Land M."/>
            <person name="Hauser L."/>
            <person name="Kyrpides N."/>
            <person name="Mikhailova N."/>
            <person name="Oremland R.S."/>
            <person name="Hoeft S.E."/>
            <person name="Switzer-Blum J."/>
            <person name="Kulp T."/>
            <person name="King G."/>
            <person name="Tabita R."/>
            <person name="Witte B."/>
            <person name="Santini J.M."/>
            <person name="Basu P."/>
            <person name="Hollibaugh J.T."/>
            <person name="Xie G."/>
            <person name="Stolz J.F."/>
            <person name="Richardson P."/>
        </authorList>
    </citation>
    <scope>NUCLEOTIDE SEQUENCE [LARGE SCALE GENOMIC DNA]</scope>
    <source>
        <strain>ATCC BAA-1101 / DSM 17681 / MLHE-1</strain>
    </source>
</reference>
<gene>
    <name evidence="1" type="primary">znuC</name>
    <name type="ordered locus">Mlg_1196</name>
</gene>
<protein>
    <recommendedName>
        <fullName evidence="1">Zinc import ATP-binding protein ZnuC</fullName>
        <ecNumber evidence="1">7.2.2.20</ecNumber>
    </recommendedName>
</protein>
<feature type="chain" id="PRO_0000281492" description="Zinc import ATP-binding protein ZnuC">
    <location>
        <begin position="1"/>
        <end position="259"/>
    </location>
</feature>
<feature type="domain" description="ABC transporter" evidence="1">
    <location>
        <begin position="22"/>
        <end position="238"/>
    </location>
</feature>
<feature type="binding site" evidence="1">
    <location>
        <begin position="54"/>
        <end position="61"/>
    </location>
    <ligand>
        <name>ATP</name>
        <dbReference type="ChEBI" id="CHEBI:30616"/>
    </ligand>
</feature>
<organism>
    <name type="scientific">Alkalilimnicola ehrlichii (strain ATCC BAA-1101 / DSM 17681 / MLHE-1)</name>
    <dbReference type="NCBI Taxonomy" id="187272"/>
    <lineage>
        <taxon>Bacteria</taxon>
        <taxon>Pseudomonadati</taxon>
        <taxon>Pseudomonadota</taxon>
        <taxon>Gammaproteobacteria</taxon>
        <taxon>Chromatiales</taxon>
        <taxon>Ectothiorhodospiraceae</taxon>
        <taxon>Alkalilimnicola</taxon>
    </lineage>
</organism>
<sequence>MFGLIHNPPHAGRLPAAATTLVEARGLTVRRGDQPVLCNVDLVVESGQVVTLVGPNGSGKSTLVQVLTGVIRDYRGQVGRRTGLRVGYVPQHFRIDRNLPITVRRFMKLAPRGRRGHWAEAVADAGVSQLLDRPMQGLSGGELRRVLLARALLSRPHLLALDEPAAGLDQRGQGELYRLIRHVRDRYGCGVLVVSHDLNLVMAATDQVLCLSEGHILCRGAPESVRAHPEYRALFGAHLGPETAVFPHAHGPGEGCTHG</sequence>
<comment type="function">
    <text evidence="1">Part of the ABC transporter complex ZnuABC involved in zinc import. Responsible for energy coupling to the transport system.</text>
</comment>
<comment type="catalytic activity">
    <reaction evidence="1">
        <text>Zn(2+)(out) + ATP(in) + H2O(in) = Zn(2+)(in) + ADP(in) + phosphate(in) + H(+)(in)</text>
        <dbReference type="Rhea" id="RHEA:29795"/>
        <dbReference type="ChEBI" id="CHEBI:15377"/>
        <dbReference type="ChEBI" id="CHEBI:15378"/>
        <dbReference type="ChEBI" id="CHEBI:29105"/>
        <dbReference type="ChEBI" id="CHEBI:30616"/>
        <dbReference type="ChEBI" id="CHEBI:43474"/>
        <dbReference type="ChEBI" id="CHEBI:456216"/>
        <dbReference type="EC" id="7.2.2.20"/>
    </reaction>
</comment>
<comment type="subunit">
    <text evidence="1">The complex is composed of two ATP-binding proteins (ZnuC), two transmembrane proteins (ZnuB) and a solute-binding protein (ZnuA).</text>
</comment>
<comment type="subcellular location">
    <subcellularLocation>
        <location evidence="1">Cell inner membrane</location>
        <topology evidence="1">Peripheral membrane protein</topology>
    </subcellularLocation>
</comment>
<comment type="similarity">
    <text evidence="1">Belongs to the ABC transporter superfamily. Zinc importer (TC 3.A.1.15.5) family.</text>
</comment>